<sequence length="230" mass="25943">MVVFGYEAGTKPRDSGVVPVGTEEAPKVFKMAASMHGQPSPSLEDAKLRRPMVIEIIEKNFDYLRKEMTQNIYQMATFGTTAGFSGIFSNFLFRRCFKVKHDALKTYASLATLPFLSTVVTDKLFVIDALYSDNISKENCVFRSSLIGIVCGVFYPSSLAFTKNGRLATKYHTVPLPPKGRVLIHWMTLCQTQMKLMAIPLVFQIMFGILNGLYHYAVFEETLEKTIHEE</sequence>
<keyword id="KW-0025">Alternative splicing</keyword>
<keyword id="KW-0143">Chaperone</keyword>
<keyword id="KW-0225">Disease variant</keyword>
<keyword id="KW-0472">Membrane</keyword>
<keyword id="KW-0496">Mitochondrion</keyword>
<keyword id="KW-0597">Phosphoprotein</keyword>
<keyword id="KW-1274">Primary mitochondrial disease</keyword>
<keyword id="KW-1267">Proteomics identification</keyword>
<keyword id="KW-1185">Reference proteome</keyword>
<keyword id="KW-0812">Transmembrane</keyword>
<keyword id="KW-1133">Transmembrane helix</keyword>
<protein>
    <recommendedName>
        <fullName evidence="11">Complex I assembly factor TMEM126B, mitochondrial</fullName>
    </recommendedName>
    <alternativeName>
        <fullName>Transmembrane protein 126B</fullName>
    </alternativeName>
</protein>
<reference key="1">
    <citation type="journal article" date="2000" name="Proc. Natl. Acad. Sci. U.S.A.">
        <title>Gene expression profiling in the human hypothalamus-pituitary-adrenal axis and full-length cDNA cloning.</title>
        <authorList>
            <person name="Hu R.-M."/>
            <person name="Han Z.-G."/>
            <person name="Song H.-D."/>
            <person name="Peng Y.-D."/>
            <person name="Huang Q.-H."/>
            <person name="Ren S.-X."/>
            <person name="Gu Y.-J."/>
            <person name="Huang C.-H."/>
            <person name="Li Y.-B."/>
            <person name="Jiang C.-L."/>
            <person name="Fu G."/>
            <person name="Zhang Q.-H."/>
            <person name="Gu B.-W."/>
            <person name="Dai M."/>
            <person name="Mao Y.-F."/>
            <person name="Gao G.-F."/>
            <person name="Rong R."/>
            <person name="Ye M."/>
            <person name="Zhou J."/>
            <person name="Xu S.-H."/>
            <person name="Gu J."/>
            <person name="Shi J.-X."/>
            <person name="Jin W.-R."/>
            <person name="Zhang C.-K."/>
            <person name="Wu T.-M."/>
            <person name="Huang G.-Y."/>
            <person name="Chen Z."/>
            <person name="Chen M.-D."/>
            <person name="Chen J.-L."/>
        </authorList>
    </citation>
    <scope>NUCLEOTIDE SEQUENCE [LARGE SCALE MRNA] (ISOFORM 2)</scope>
    <source>
        <tissue>Hypothalamus</tissue>
    </source>
</reference>
<reference key="2">
    <citation type="submission" date="2003-02" db="EMBL/GenBank/DDBJ databases">
        <title>Full-length cDNA libraries and normalization.</title>
        <authorList>
            <person name="Li W.B."/>
            <person name="Gruber C."/>
            <person name="Jessee J."/>
            <person name="Polayes D."/>
        </authorList>
    </citation>
    <scope>NUCLEOTIDE SEQUENCE [LARGE SCALE MRNA] (ISOFORM 1)</scope>
    <source>
        <tissue>Cervix carcinoma</tissue>
    </source>
</reference>
<reference key="3">
    <citation type="journal article" date="2004" name="Nat. Genet.">
        <title>Complete sequencing and characterization of 21,243 full-length human cDNAs.</title>
        <authorList>
            <person name="Ota T."/>
            <person name="Suzuki Y."/>
            <person name="Nishikawa T."/>
            <person name="Otsuki T."/>
            <person name="Sugiyama T."/>
            <person name="Irie R."/>
            <person name="Wakamatsu A."/>
            <person name="Hayashi K."/>
            <person name="Sato H."/>
            <person name="Nagai K."/>
            <person name="Kimura K."/>
            <person name="Makita H."/>
            <person name="Sekine M."/>
            <person name="Obayashi M."/>
            <person name="Nishi T."/>
            <person name="Shibahara T."/>
            <person name="Tanaka T."/>
            <person name="Ishii S."/>
            <person name="Yamamoto J."/>
            <person name="Saito K."/>
            <person name="Kawai Y."/>
            <person name="Isono Y."/>
            <person name="Nakamura Y."/>
            <person name="Nagahari K."/>
            <person name="Murakami K."/>
            <person name="Yasuda T."/>
            <person name="Iwayanagi T."/>
            <person name="Wagatsuma M."/>
            <person name="Shiratori A."/>
            <person name="Sudo H."/>
            <person name="Hosoiri T."/>
            <person name="Kaku Y."/>
            <person name="Kodaira H."/>
            <person name="Kondo H."/>
            <person name="Sugawara M."/>
            <person name="Takahashi M."/>
            <person name="Kanda K."/>
            <person name="Yokoi T."/>
            <person name="Furuya T."/>
            <person name="Kikkawa E."/>
            <person name="Omura Y."/>
            <person name="Abe K."/>
            <person name="Kamihara K."/>
            <person name="Katsuta N."/>
            <person name="Sato K."/>
            <person name="Tanikawa M."/>
            <person name="Yamazaki M."/>
            <person name="Ninomiya K."/>
            <person name="Ishibashi T."/>
            <person name="Yamashita H."/>
            <person name="Murakawa K."/>
            <person name="Fujimori K."/>
            <person name="Tanai H."/>
            <person name="Kimata M."/>
            <person name="Watanabe M."/>
            <person name="Hiraoka S."/>
            <person name="Chiba Y."/>
            <person name="Ishida S."/>
            <person name="Ono Y."/>
            <person name="Takiguchi S."/>
            <person name="Watanabe S."/>
            <person name="Yosida M."/>
            <person name="Hotuta T."/>
            <person name="Kusano J."/>
            <person name="Kanehori K."/>
            <person name="Takahashi-Fujii A."/>
            <person name="Hara H."/>
            <person name="Tanase T.-O."/>
            <person name="Nomura Y."/>
            <person name="Togiya S."/>
            <person name="Komai F."/>
            <person name="Hara R."/>
            <person name="Takeuchi K."/>
            <person name="Arita M."/>
            <person name="Imose N."/>
            <person name="Musashino K."/>
            <person name="Yuuki H."/>
            <person name="Oshima A."/>
            <person name="Sasaki N."/>
            <person name="Aotsuka S."/>
            <person name="Yoshikawa Y."/>
            <person name="Matsunawa H."/>
            <person name="Ichihara T."/>
            <person name="Shiohata N."/>
            <person name="Sano S."/>
            <person name="Moriya S."/>
            <person name="Momiyama H."/>
            <person name="Satoh N."/>
            <person name="Takami S."/>
            <person name="Terashima Y."/>
            <person name="Suzuki O."/>
            <person name="Nakagawa S."/>
            <person name="Senoh A."/>
            <person name="Mizoguchi H."/>
            <person name="Goto Y."/>
            <person name="Shimizu F."/>
            <person name="Wakebe H."/>
            <person name="Hishigaki H."/>
            <person name="Watanabe T."/>
            <person name="Sugiyama A."/>
            <person name="Takemoto M."/>
            <person name="Kawakami B."/>
            <person name="Yamazaki M."/>
            <person name="Watanabe K."/>
            <person name="Kumagai A."/>
            <person name="Itakura S."/>
            <person name="Fukuzumi Y."/>
            <person name="Fujimori Y."/>
            <person name="Komiyama M."/>
            <person name="Tashiro H."/>
            <person name="Tanigami A."/>
            <person name="Fujiwara T."/>
            <person name="Ono T."/>
            <person name="Yamada K."/>
            <person name="Fujii Y."/>
            <person name="Ozaki K."/>
            <person name="Hirao M."/>
            <person name="Ohmori Y."/>
            <person name="Kawabata A."/>
            <person name="Hikiji T."/>
            <person name="Kobatake N."/>
            <person name="Inagaki H."/>
            <person name="Ikema Y."/>
            <person name="Okamoto S."/>
            <person name="Okitani R."/>
            <person name="Kawakami T."/>
            <person name="Noguchi S."/>
            <person name="Itoh T."/>
            <person name="Shigeta K."/>
            <person name="Senba T."/>
            <person name="Matsumura K."/>
            <person name="Nakajima Y."/>
            <person name="Mizuno T."/>
            <person name="Morinaga M."/>
            <person name="Sasaki M."/>
            <person name="Togashi T."/>
            <person name="Oyama M."/>
            <person name="Hata H."/>
            <person name="Watanabe M."/>
            <person name="Komatsu T."/>
            <person name="Mizushima-Sugano J."/>
            <person name="Satoh T."/>
            <person name="Shirai Y."/>
            <person name="Takahashi Y."/>
            <person name="Nakagawa K."/>
            <person name="Okumura K."/>
            <person name="Nagase T."/>
            <person name="Nomura N."/>
            <person name="Kikuchi H."/>
            <person name="Masuho Y."/>
            <person name="Yamashita R."/>
            <person name="Nakai K."/>
            <person name="Yada T."/>
            <person name="Nakamura Y."/>
            <person name="Ohara O."/>
            <person name="Isogai T."/>
            <person name="Sugano S."/>
        </authorList>
    </citation>
    <scope>NUCLEOTIDE SEQUENCE [LARGE SCALE MRNA] (ISOFORM 5)</scope>
</reference>
<reference key="4">
    <citation type="journal article" date="2006" name="Nature">
        <title>Human chromosome 11 DNA sequence and analysis including novel gene identification.</title>
        <authorList>
            <person name="Taylor T.D."/>
            <person name="Noguchi H."/>
            <person name="Totoki Y."/>
            <person name="Toyoda A."/>
            <person name="Kuroki Y."/>
            <person name="Dewar K."/>
            <person name="Lloyd C."/>
            <person name="Itoh T."/>
            <person name="Takeda T."/>
            <person name="Kim D.-W."/>
            <person name="She X."/>
            <person name="Barlow K.F."/>
            <person name="Bloom T."/>
            <person name="Bruford E."/>
            <person name="Chang J.L."/>
            <person name="Cuomo C.A."/>
            <person name="Eichler E."/>
            <person name="FitzGerald M.G."/>
            <person name="Jaffe D.B."/>
            <person name="LaButti K."/>
            <person name="Nicol R."/>
            <person name="Park H.-S."/>
            <person name="Seaman C."/>
            <person name="Sougnez C."/>
            <person name="Yang X."/>
            <person name="Zimmer A.R."/>
            <person name="Zody M.C."/>
            <person name="Birren B.W."/>
            <person name="Nusbaum C."/>
            <person name="Fujiyama A."/>
            <person name="Hattori M."/>
            <person name="Rogers J."/>
            <person name="Lander E.S."/>
            <person name="Sakaki Y."/>
        </authorList>
    </citation>
    <scope>NUCLEOTIDE SEQUENCE [LARGE SCALE GENOMIC DNA]</scope>
</reference>
<reference key="5">
    <citation type="submission" date="2005-07" db="EMBL/GenBank/DDBJ databases">
        <authorList>
            <person name="Mural R.J."/>
            <person name="Istrail S."/>
            <person name="Sutton G."/>
            <person name="Florea L."/>
            <person name="Halpern A.L."/>
            <person name="Mobarry C.M."/>
            <person name="Lippert R."/>
            <person name="Walenz B."/>
            <person name="Shatkay H."/>
            <person name="Dew I."/>
            <person name="Miller J.R."/>
            <person name="Flanigan M.J."/>
            <person name="Edwards N.J."/>
            <person name="Bolanos R."/>
            <person name="Fasulo D."/>
            <person name="Halldorsson B.V."/>
            <person name="Hannenhalli S."/>
            <person name="Turner R."/>
            <person name="Yooseph S."/>
            <person name="Lu F."/>
            <person name="Nusskern D.R."/>
            <person name="Shue B.C."/>
            <person name="Zheng X.H."/>
            <person name="Zhong F."/>
            <person name="Delcher A.L."/>
            <person name="Huson D.H."/>
            <person name="Kravitz S.A."/>
            <person name="Mouchard L."/>
            <person name="Reinert K."/>
            <person name="Remington K.A."/>
            <person name="Clark A.G."/>
            <person name="Waterman M.S."/>
            <person name="Eichler E.E."/>
            <person name="Adams M.D."/>
            <person name="Hunkapiller M.W."/>
            <person name="Myers E.W."/>
            <person name="Venter J.C."/>
        </authorList>
    </citation>
    <scope>NUCLEOTIDE SEQUENCE [LARGE SCALE GENOMIC DNA]</scope>
</reference>
<reference key="6">
    <citation type="journal article" date="2004" name="Genome Res.">
        <title>The status, quality, and expansion of the NIH full-length cDNA project: the Mammalian Gene Collection (MGC).</title>
        <authorList>
            <consortium name="The MGC Project Team"/>
        </authorList>
    </citation>
    <scope>NUCLEOTIDE SEQUENCE [LARGE SCALE MRNA] (ISOFORMS 3; 4 AND 5)</scope>
    <scope>VARIANT VAL-198</scope>
    <source>
        <tissue>B-cell</tissue>
        <tissue>Blood vessel</tissue>
        <tissue>Brain</tissue>
    </source>
</reference>
<reference key="7">
    <citation type="journal article" date="2013" name="J. Proteome Res.">
        <title>Toward a comprehensive characterization of a human cancer cell phosphoproteome.</title>
        <authorList>
            <person name="Zhou H."/>
            <person name="Di Palma S."/>
            <person name="Preisinger C."/>
            <person name="Peng M."/>
            <person name="Polat A.N."/>
            <person name="Heck A.J."/>
            <person name="Mohammed S."/>
        </authorList>
    </citation>
    <scope>PHOSPHORYLATION [LARGE SCALE ANALYSIS] AT SER-34</scope>
    <scope>IDENTIFICATION BY MASS SPECTROMETRY [LARGE SCALE ANALYSIS]</scope>
    <source>
        <tissue>Erythroleukemia</tissue>
    </source>
</reference>
<reference key="8">
    <citation type="journal article" date="2013" name="Proc. Natl. Acad. Sci. U.S.A.">
        <title>Assembly factors for the membrane arm of human complex I.</title>
        <authorList>
            <person name="Andrews B."/>
            <person name="Carroll J."/>
            <person name="Ding S."/>
            <person name="Fearnley I.M."/>
            <person name="Walker J.E."/>
        </authorList>
    </citation>
    <scope>FUNCTION</scope>
    <scope>SUBCELLULAR LOCATION</scope>
    <scope>SUBUNIT</scope>
</reference>
<reference key="9">
    <citation type="journal article" date="2015" name="Proteomics">
        <title>N-terminome analysis of the human mitochondrial proteome.</title>
        <authorList>
            <person name="Vaca Jacome A.S."/>
            <person name="Rabilloud T."/>
            <person name="Schaeffer-Reiss C."/>
            <person name="Rompais M."/>
            <person name="Ayoub D."/>
            <person name="Lane L."/>
            <person name="Bairoch A."/>
            <person name="Van Dorsselaer A."/>
            <person name="Carapito C."/>
        </authorList>
    </citation>
    <scope>CLEAVAGE OF INITIATOR METHIONINE [LARGE SCALE ANALYSIS]</scope>
    <scope>IDENTIFICATION BY MASS SPECTROMETRY [LARGE SCALE ANALYSIS]</scope>
</reference>
<reference key="10">
    <citation type="journal article" date="2020" name="Cell Rep.">
        <title>Dissecting the Roles of Mitochondrial Complex I Intermediate Assembly Complex Factors in the Biogenesis of Complex I.</title>
        <authorList>
            <person name="Formosa L.E."/>
            <person name="Muellner-Wong L."/>
            <person name="Reljic B."/>
            <person name="Sharpe A.J."/>
            <person name="Jackson T.D."/>
            <person name="Beilharz T.H."/>
            <person name="Stojanovski D."/>
            <person name="Lazarou M."/>
            <person name="Stroud D.A."/>
            <person name="Ryan M.T."/>
        </authorList>
    </citation>
    <scope>IDENTIFICATION IN THE MCIA COMPLEX</scope>
    <scope>FUNCTION</scope>
</reference>
<reference key="11">
    <citation type="journal article" date="2021" name="Proc. Natl. Acad. Sci. U.S.A.">
        <title>TMEM70 and TMEM242 help to assemble the rotor ring of human ATP synthase and interact with assembly factors for complex I.</title>
        <authorList>
            <person name="Carroll J."/>
            <person name="He J."/>
            <person name="Ding S."/>
            <person name="Fearnley I.M."/>
            <person name="Walker J.E."/>
        </authorList>
    </citation>
    <scope>INTERACTION WITH TMEM70</scope>
</reference>
<reference key="12">
    <citation type="journal article" date="2016" name="Am. J. Hum. Genet.">
        <title>Mutations in complex I assembly factor TMEM126B result in muscle weakness and isolated complex I deficiency.</title>
        <authorList>
            <person name="Sanchez-Caballero L."/>
            <person name="Ruzzenente B."/>
            <person name="Bianchi L."/>
            <person name="Assouline Z."/>
            <person name="Barcia G."/>
            <person name="Metodiev M.D."/>
            <person name="Rio M."/>
            <person name="Funalot B."/>
            <person name="van den Brand M.A."/>
            <person name="Guerrero-Castillo S."/>
            <person name="Molenaar J.P."/>
            <person name="Koolen D."/>
            <person name="Brandt U."/>
            <person name="Rodenburg R.J."/>
            <person name="Nijtmans L.G."/>
            <person name="Roetig A."/>
        </authorList>
    </citation>
    <scope>INVOLVEMENT IN MC1DN29</scope>
    <scope>VARIANTS MC1DN29 70-GLN--GLU-230 DEL AND VAL-212</scope>
    <scope>CHARACTERIZATION OF VARIANTS MC1DN29 70-GLN--GLU-230 DEL AND VAL-212</scope>
</reference>
<reference key="13">
    <citation type="journal article" date="2016" name="Am. J. Hum. Genet.">
        <title>Biallelic mutations in TMEM126B cause severe complex I deficiency with a variable clinical phenotype.</title>
        <authorList>
            <person name="Alston C.L."/>
            <person name="Compton A.G."/>
            <person name="Formosa L.E."/>
            <person name="Strecker V."/>
            <person name="Olahova M."/>
            <person name="Haack T.B."/>
            <person name="Smet J."/>
            <person name="Stouffs K."/>
            <person name="Diakumis P."/>
            <person name="Ciara E."/>
            <person name="Cassiman D."/>
            <person name="Romain N."/>
            <person name="Yarham J.W."/>
            <person name="He L."/>
            <person name="De Paepe B."/>
            <person name="Vanlander A.V."/>
            <person name="Seneca S."/>
            <person name="Feichtinger R.G."/>
            <person name="Ploski R."/>
            <person name="Rokicki D."/>
            <person name="Pronicka E."/>
            <person name="Haller R.G."/>
            <person name="Van Hove J.L."/>
            <person name="Bahlo M."/>
            <person name="Mayr J.A."/>
            <person name="Van Coster R."/>
            <person name="Prokisch H."/>
            <person name="Wittig I."/>
            <person name="Ryan M.T."/>
            <person name="Thorburn D.R."/>
            <person name="Taylor R.W."/>
        </authorList>
    </citation>
    <scope>INVOLVEMENT IN MC1DN29</scope>
    <scope>VARIANT MC1DN29 VAL-212</scope>
    <scope>CHARACTERIZATION OF VARIANT MC1DN29 VAL-212</scope>
</reference>
<organism>
    <name type="scientific">Homo sapiens</name>
    <name type="common">Human</name>
    <dbReference type="NCBI Taxonomy" id="9606"/>
    <lineage>
        <taxon>Eukaryota</taxon>
        <taxon>Metazoa</taxon>
        <taxon>Chordata</taxon>
        <taxon>Craniata</taxon>
        <taxon>Vertebrata</taxon>
        <taxon>Euteleostomi</taxon>
        <taxon>Mammalia</taxon>
        <taxon>Eutheria</taxon>
        <taxon>Euarchontoglires</taxon>
        <taxon>Primates</taxon>
        <taxon>Haplorrhini</taxon>
        <taxon>Catarrhini</taxon>
        <taxon>Hominidae</taxon>
        <taxon>Homo</taxon>
    </lineage>
</organism>
<comment type="function">
    <text evidence="3 4 5 6">As part of the MCIA complex, involved in the assembly of the mitochondrial complex I (PubMed:27374773, PubMed:27374774, PubMed:32320651). Participates in constructing the membrane arm of complex I (PubMed:24191001).</text>
</comment>
<comment type="subunit">
    <text evidence="3 6 7">Part of the mitochondrial complex I assembly/MCIA complex that comprises at least the core subunits TMEM126B, NDUFAF1, ECSIT and ACAD9 and complement subunits such as COA1 and TMEM186 (PubMed:32320651). Associates with the intermediate 370 kDa subcomplex of incompletely assembled complex I (PubMed:24191001). Interacts with TMEM70 (PubMed:33753518).</text>
</comment>
<comment type="interaction">
    <interactant intactId="EBI-2800657">
        <id>Q8IUX1</id>
    </interactant>
    <interactant intactId="EBI-748896">
        <id>Q96HT8</id>
        <label>MRFAP1L1</label>
    </interactant>
    <organismsDiffer>false</organismsDiffer>
    <experiments>3</experiments>
</comment>
<comment type="subcellular location">
    <subcellularLocation>
        <location evidence="3">Mitochondrion membrane</location>
        <topology evidence="3">Multi-pass membrane protein</topology>
    </subcellularLocation>
</comment>
<comment type="alternative products">
    <event type="alternative splicing"/>
    <isoform>
        <id>Q8IUX1-1</id>
        <name>1</name>
        <sequence type="displayed"/>
    </isoform>
    <isoform>
        <id>Q8IUX1-2</id>
        <name>2</name>
        <sequence type="described" ref="VSP_023871 VSP_023872"/>
    </isoform>
    <isoform>
        <id>Q8IUX1-3</id>
        <name>3</name>
        <sequence type="described" ref="VSP_023870 VSP_023873 VSP_023874"/>
    </isoform>
    <isoform>
        <id>Q8IUX1-4</id>
        <name>4</name>
        <sequence type="described" ref="VSP_023875"/>
    </isoform>
    <isoform>
        <id>Q8IUX1-5</id>
        <name>5</name>
        <sequence type="described" ref="VSP_023870"/>
    </isoform>
</comment>
<comment type="disease" evidence="4 5">
    <disease id="DI-05425">
        <name>Mitochondrial complex I deficiency, nuclear type 29</name>
        <acronym>MC1DN29</acronym>
        <description>A form of mitochondrial complex I deficiency, the most common biochemical signature of mitochondrial disorders, a group of highly heterogeneous conditions characterized by defective oxidative phosphorylation, which collectively affects 1 in 5-10000 live births. Clinical disorders have variable severity, ranging from lethal neonatal disease to adult-onset neurodegenerative disorders. Phenotypes include macrocephaly with progressive leukodystrophy, non-specific encephalopathy, cardiomyopathy, myopathy, liver disease, Leigh syndrome, Leber hereditary optic neuropathy, and some forms of Parkinson disease. MC1DN29 transmission pattern is consistent with autosomal recessive inheritance.</description>
        <dbReference type="MIM" id="618250"/>
    </disease>
    <text>The disease is caused by variants affecting the gene represented in this entry.</text>
</comment>
<comment type="similarity">
    <text evidence="11">Belongs to the TMEM126 family.</text>
</comment>
<comment type="sequence caution" evidence="11">
    <conflict type="frameshift">
        <sequence resource="EMBL-CDS" id="AAI07901"/>
    </conflict>
</comment>
<proteinExistence type="evidence at protein level"/>
<evidence type="ECO:0000255" key="1"/>
<evidence type="ECO:0000269" key="2">
    <source>
    </source>
</evidence>
<evidence type="ECO:0000269" key="3">
    <source>
    </source>
</evidence>
<evidence type="ECO:0000269" key="4">
    <source>
    </source>
</evidence>
<evidence type="ECO:0000269" key="5">
    <source>
    </source>
</evidence>
<evidence type="ECO:0000269" key="6">
    <source>
    </source>
</evidence>
<evidence type="ECO:0000269" key="7">
    <source>
    </source>
</evidence>
<evidence type="ECO:0000303" key="8">
    <source>
    </source>
</evidence>
<evidence type="ECO:0000303" key="9">
    <source>
    </source>
</evidence>
<evidence type="ECO:0000303" key="10">
    <source>
    </source>
</evidence>
<evidence type="ECO:0000305" key="11"/>
<evidence type="ECO:0000312" key="12">
    <source>
        <dbReference type="HGNC" id="HGNC:30883"/>
    </source>
</evidence>
<evidence type="ECO:0007744" key="13">
    <source>
    </source>
</evidence>
<evidence type="ECO:0007744" key="14">
    <source>
    </source>
</evidence>
<name>T126B_HUMAN</name>
<accession>Q8IUX1</accession>
<accession>A8K535</accession>
<accession>A8MSS0</accession>
<accession>Q32Q09</accession>
<accession>Q8WVU3</accession>
<accession>Q96EP3</accession>
<accession>Q9NZ29</accession>
<feature type="initiator methionine" description="Removed" evidence="14">
    <location>
        <position position="1"/>
    </location>
</feature>
<feature type="chain" id="PRO_0000280716" description="Complex I assembly factor TMEM126B, mitochondrial">
    <location>
        <begin position="2"/>
        <end position="230"/>
    </location>
</feature>
<feature type="transmembrane region" description="Helical" evidence="1">
    <location>
        <begin position="72"/>
        <end position="92"/>
    </location>
</feature>
<feature type="transmembrane region" description="Helical" evidence="1">
    <location>
        <begin position="110"/>
        <end position="130"/>
    </location>
</feature>
<feature type="transmembrane region" description="Helical" evidence="1">
    <location>
        <begin position="141"/>
        <end position="161"/>
    </location>
</feature>
<feature type="transmembrane region" description="Helical" evidence="1">
    <location>
        <begin position="199"/>
        <end position="219"/>
    </location>
</feature>
<feature type="modified residue" description="Phosphoserine" evidence="13">
    <location>
        <position position="34"/>
    </location>
</feature>
<feature type="splice variant" id="VSP_023870" description="In isoform 3 and isoform 5." evidence="9 10">
    <location>
        <begin position="1"/>
        <end position="30"/>
    </location>
</feature>
<feature type="splice variant" id="VSP_023871" description="In isoform 2." evidence="8">
    <location>
        <begin position="1"/>
        <end position="18"/>
    </location>
</feature>
<feature type="splice variant" id="VSP_023872" description="In isoform 2." evidence="8">
    <original>P</original>
    <variation>MWIQVWMT</variation>
    <location>
        <position position="19"/>
    </location>
</feature>
<feature type="splice variant" id="VSP_023873" description="In isoform 3." evidence="10">
    <original>DNISKENC</original>
    <variation>GEFKFTNV</variation>
    <location>
        <begin position="133"/>
        <end position="140"/>
    </location>
</feature>
<feature type="splice variant" id="VSP_023874" description="In isoform 3." evidence="10">
    <location>
        <begin position="141"/>
        <end position="230"/>
    </location>
</feature>
<feature type="splice variant" id="VSP_023875" description="In isoform 4." evidence="10">
    <location>
        <begin position="171"/>
        <end position="230"/>
    </location>
</feature>
<feature type="sequence variant" id="VAR_081464" description="In MC1DN29; loss of function in complex I assembly." evidence="4">
    <location>
        <begin position="70"/>
        <end position="230"/>
    </location>
</feature>
<feature type="sequence variant" id="VAR_031188" description="In dbSNP:rs17850847." evidence="2">
    <original>A</original>
    <variation>V</variation>
    <location>
        <position position="198"/>
    </location>
</feature>
<feature type="sequence variant" id="VAR_081465" description="In MC1DN29; decreased function in complex I assembly; dbSNP:rs141542003." evidence="4 5">
    <original>G</original>
    <variation>V</variation>
    <location>
        <position position="212"/>
    </location>
</feature>
<gene>
    <name evidence="12" type="primary">TMEM126B</name>
    <name type="ORF">HT007</name>
</gene>
<dbReference type="EMBL" id="AF220193">
    <property type="protein sequence ID" value="AAF67658.1"/>
    <property type="molecule type" value="mRNA"/>
</dbReference>
<dbReference type="EMBL" id="CR612738">
    <property type="status" value="NOT_ANNOTATED_CDS"/>
    <property type="molecule type" value="mRNA"/>
</dbReference>
<dbReference type="EMBL" id="AK291150">
    <property type="protein sequence ID" value="BAF83839.1"/>
    <property type="molecule type" value="mRNA"/>
</dbReference>
<dbReference type="EMBL" id="AP000642">
    <property type="status" value="NOT_ANNOTATED_CDS"/>
    <property type="molecule type" value="Genomic_DNA"/>
</dbReference>
<dbReference type="EMBL" id="CH471076">
    <property type="protein sequence ID" value="EAW75098.1"/>
    <property type="molecule type" value="Genomic_DNA"/>
</dbReference>
<dbReference type="EMBL" id="BC012065">
    <property type="protein sequence ID" value="AAH12065.1"/>
    <property type="molecule type" value="mRNA"/>
</dbReference>
<dbReference type="EMBL" id="BC017574">
    <property type="protein sequence ID" value="AAH17574.1"/>
    <property type="molecule type" value="mRNA"/>
</dbReference>
<dbReference type="EMBL" id="BC038933">
    <property type="protein sequence ID" value="AAH38933.1"/>
    <property type="molecule type" value="mRNA"/>
</dbReference>
<dbReference type="EMBL" id="BC107900">
    <property type="protein sequence ID" value="AAI07901.1"/>
    <property type="status" value="ALT_FRAME"/>
    <property type="molecule type" value="mRNA"/>
</dbReference>
<dbReference type="CCDS" id="CCDS53686.1">
    <molecule id="Q8IUX1-5"/>
</dbReference>
<dbReference type="CCDS" id="CCDS8267.2">
    <molecule id="Q8IUX1-1"/>
</dbReference>
<dbReference type="RefSeq" id="NP_001180467.1">
    <molecule id="Q8IUX1-5"/>
    <property type="nucleotide sequence ID" value="NM_001193538.3"/>
</dbReference>
<dbReference type="RefSeq" id="NP_001243475.1">
    <molecule id="Q8IUX1-5"/>
    <property type="nucleotide sequence ID" value="NM_001256546.2"/>
</dbReference>
<dbReference type="RefSeq" id="NP_001337325.1">
    <molecule id="Q8IUX1-3"/>
    <property type="nucleotide sequence ID" value="NM_001350396.2"/>
</dbReference>
<dbReference type="RefSeq" id="NP_060950.3">
    <molecule id="Q8IUX1-1"/>
    <property type="nucleotide sequence ID" value="NM_018480.4"/>
</dbReference>
<dbReference type="RefSeq" id="XP_011543467.1">
    <property type="nucleotide sequence ID" value="XM_011545165.2"/>
</dbReference>
<dbReference type="BioGRID" id="120965">
    <property type="interactions" value="55"/>
</dbReference>
<dbReference type="ComplexPortal" id="CPX-6322">
    <property type="entry name" value="Mitochondrial complex I intermediate assembly (MCIA) complex"/>
</dbReference>
<dbReference type="FunCoup" id="Q8IUX1">
    <property type="interactions" value="761"/>
</dbReference>
<dbReference type="IntAct" id="Q8IUX1">
    <property type="interactions" value="34"/>
</dbReference>
<dbReference type="MINT" id="Q8IUX1"/>
<dbReference type="STRING" id="9606.ENSP00000351737"/>
<dbReference type="TCDB" id="9.B.317.1.1">
    <property type="family name" value="the complex i integral membrane chaperone, tmem126 (tmem126) family"/>
</dbReference>
<dbReference type="iPTMnet" id="Q8IUX1"/>
<dbReference type="PhosphoSitePlus" id="Q8IUX1"/>
<dbReference type="SwissPalm" id="Q8IUX1"/>
<dbReference type="BioMuta" id="TMEM126B"/>
<dbReference type="DMDM" id="134035041"/>
<dbReference type="jPOST" id="Q8IUX1"/>
<dbReference type="MassIVE" id="Q8IUX1"/>
<dbReference type="PaxDb" id="9606-ENSP00000351737"/>
<dbReference type="PeptideAtlas" id="Q8IUX1"/>
<dbReference type="ProteomicsDB" id="70618">
    <molecule id="Q8IUX1-1"/>
</dbReference>
<dbReference type="ProteomicsDB" id="70619">
    <molecule id="Q8IUX1-2"/>
</dbReference>
<dbReference type="ProteomicsDB" id="70620">
    <molecule id="Q8IUX1-3"/>
</dbReference>
<dbReference type="ProteomicsDB" id="70621">
    <molecule id="Q8IUX1-4"/>
</dbReference>
<dbReference type="ProteomicsDB" id="70622">
    <molecule id="Q8IUX1-5"/>
</dbReference>
<dbReference type="Pumba" id="Q8IUX1"/>
<dbReference type="Antibodypedia" id="17580">
    <property type="antibodies" value="57 antibodies from 12 providers"/>
</dbReference>
<dbReference type="DNASU" id="55863"/>
<dbReference type="Ensembl" id="ENST00000358867.11">
    <molecule id="Q8IUX1-1"/>
    <property type="protein sequence ID" value="ENSP00000351737.7"/>
    <property type="gene ID" value="ENSG00000171204.13"/>
</dbReference>
<dbReference type="Ensembl" id="ENST00000393375.5">
    <molecule id="Q8IUX1-5"/>
    <property type="protein sequence ID" value="ENSP00000377039.1"/>
    <property type="gene ID" value="ENSG00000171204.13"/>
</dbReference>
<dbReference type="Ensembl" id="ENST00000534341.1">
    <molecule id="Q8IUX1-4"/>
    <property type="protein sequence ID" value="ENSP00000433471.1"/>
    <property type="gene ID" value="ENSG00000171204.13"/>
</dbReference>
<dbReference type="GeneID" id="55863"/>
<dbReference type="KEGG" id="hsa:55863"/>
<dbReference type="MANE-Select" id="ENST00000358867.11">
    <property type="protein sequence ID" value="ENSP00000351737.7"/>
    <property type="RefSeq nucleotide sequence ID" value="NM_018480.7"/>
    <property type="RefSeq protein sequence ID" value="NP_060950.3"/>
</dbReference>
<dbReference type="UCSC" id="uc001pao.4">
    <molecule id="Q8IUX1-1"/>
    <property type="organism name" value="human"/>
</dbReference>
<dbReference type="AGR" id="HGNC:30883"/>
<dbReference type="CTD" id="55863"/>
<dbReference type="DisGeNET" id="55863"/>
<dbReference type="GeneCards" id="TMEM126B"/>
<dbReference type="HGNC" id="HGNC:30883">
    <property type="gene designation" value="TMEM126B"/>
</dbReference>
<dbReference type="HPA" id="ENSG00000171204">
    <property type="expression patterns" value="Low tissue specificity"/>
</dbReference>
<dbReference type="MalaCards" id="TMEM126B"/>
<dbReference type="MIM" id="615533">
    <property type="type" value="gene"/>
</dbReference>
<dbReference type="MIM" id="618250">
    <property type="type" value="phenotype"/>
</dbReference>
<dbReference type="neXtProt" id="NX_Q8IUX1"/>
<dbReference type="OpenTargets" id="ENSG00000171204"/>
<dbReference type="Orphanet" id="2609">
    <property type="disease" value="Isolated complex I deficiency"/>
</dbReference>
<dbReference type="PharmGKB" id="PA143485646"/>
<dbReference type="VEuPathDB" id="HostDB:ENSG00000171204"/>
<dbReference type="eggNOG" id="ENOG502SQEZ">
    <property type="taxonomic scope" value="Eukaryota"/>
</dbReference>
<dbReference type="GeneTree" id="ENSGT00520000055616"/>
<dbReference type="HOGENOM" id="CLU_105475_0_0_1"/>
<dbReference type="InParanoid" id="Q8IUX1"/>
<dbReference type="OMA" id="QHYARFE"/>
<dbReference type="OrthoDB" id="6234762at2759"/>
<dbReference type="PAN-GO" id="Q8IUX1">
    <property type="GO annotations" value="2 GO annotations based on evolutionary models"/>
</dbReference>
<dbReference type="PhylomeDB" id="Q8IUX1"/>
<dbReference type="TreeFam" id="TF327069"/>
<dbReference type="PathwayCommons" id="Q8IUX1"/>
<dbReference type="Reactome" id="R-HSA-6799198">
    <property type="pathway name" value="Complex I biogenesis"/>
</dbReference>
<dbReference type="SignaLink" id="Q8IUX1"/>
<dbReference type="BioGRID-ORCS" id="55863">
    <property type="hits" value="37 hits in 1168 CRISPR screens"/>
</dbReference>
<dbReference type="ChiTaRS" id="TMEM126B">
    <property type="organism name" value="human"/>
</dbReference>
<dbReference type="GeneWiki" id="TMEM126B"/>
<dbReference type="GenomeRNAi" id="55863"/>
<dbReference type="Pharos" id="Q8IUX1">
    <property type="development level" value="Tbio"/>
</dbReference>
<dbReference type="PRO" id="PR:Q8IUX1"/>
<dbReference type="Proteomes" id="UP000005640">
    <property type="component" value="Chromosome 11"/>
</dbReference>
<dbReference type="RNAct" id="Q8IUX1">
    <property type="molecule type" value="protein"/>
</dbReference>
<dbReference type="Bgee" id="ENSG00000171204">
    <property type="expression patterns" value="Expressed in pigmented layer of retina and 203 other cell types or tissues"/>
</dbReference>
<dbReference type="ExpressionAtlas" id="Q8IUX1">
    <property type="expression patterns" value="baseline and differential"/>
</dbReference>
<dbReference type="GO" id="GO:0005743">
    <property type="term" value="C:mitochondrial inner membrane"/>
    <property type="evidence" value="ECO:0000304"/>
    <property type="project" value="Reactome"/>
</dbReference>
<dbReference type="GO" id="GO:0005739">
    <property type="term" value="C:mitochondrion"/>
    <property type="evidence" value="ECO:0000314"/>
    <property type="project" value="HPA"/>
</dbReference>
<dbReference type="GO" id="GO:0032981">
    <property type="term" value="P:mitochondrial respiratory chain complex I assembly"/>
    <property type="evidence" value="ECO:0000315"/>
    <property type="project" value="UniProtKB"/>
</dbReference>
<dbReference type="GO" id="GO:0032094">
    <property type="term" value="P:response to food"/>
    <property type="evidence" value="ECO:0007669"/>
    <property type="project" value="Ensembl"/>
</dbReference>
<dbReference type="InterPro" id="IPR009801">
    <property type="entry name" value="TMEM126"/>
</dbReference>
<dbReference type="PANTHER" id="PTHR16296:SF3">
    <property type="entry name" value="COMPLEX I ASSEMBLY FACTOR TMEM126B, MITOCHONDRIAL"/>
    <property type="match status" value="1"/>
</dbReference>
<dbReference type="PANTHER" id="PTHR16296">
    <property type="entry name" value="UNCHARACTERIZED HYPOTHALAMUS PROTEIN HT007"/>
    <property type="match status" value="1"/>
</dbReference>
<dbReference type="Pfam" id="PF07114">
    <property type="entry name" value="TMEM126"/>
    <property type="match status" value="1"/>
</dbReference>